<gene>
    <name evidence="1" type="primary">leuS</name>
    <name type="ordered locus">NE1139</name>
</gene>
<sequence length="869" mass="98496">MQEKYHPQEIERQARQSWQETNIFNVTEIPDRPKYYCLSMFPYPSGKLHMGHVRNYTIGDVLSRYRRMQGYNVMQPMGWDAFGLPAENAAIQKGVPPAKWTYDNIAYMRSQLQSLGFAIDWQRELATCDPQYYRWNQWLFLRMLEKGIAYQKTQVVNWDPVDQTVLANEQVIDGCGWRTGAVVEKREIPGYYLAITRYADELLADLEKLPGWPERVKTMQANWIGKSFGVDITFPPDTASGMPQALKVFTTRADTLMGVTYVAVAAEHPVALHAAHNQPDLVAFIESCRQGATMEAELAVQEKKGMATGLYVLHPLTGERLPVWVANYVLMSYGEGAVMAVPAHDERDFDFARQHSLPIKPVIRPENGELSVPLVQAFTEYGVTFNSDRFSDLTSPEAIDAIAVELGQKALGEKRVRYRLRDWGISRQRYWGCPIPLIHCDSCGVVPVADDQLPVVLPEDLVPDGSGNPLAKTPSFYECTCPRCGRQARRETDTMDTFVDSSWYFIRYACPDQSAAMTDQRANYWLPVDQYIGGIEHAILHLLYSRFWSKVMRDLGLVSFDEPFANLLTQGMVLNEIFFRKTSSGRIQYFNPAEVDVQHDGEGKRVGAVLQADNQPVESGGIGTMSKSKNNGIDPQEIIEQYGADTARLFMMFASPPTQTLEWSDAGVEGAFRFLKRLWRQVYLHRQLDGEAAATTTLVPHQEYPADLRDLRCQLHQTIVKVTDDLERRHTFNTAIAAIMELMNELSDVQGTHPAARQLMQEALENIVLLLSPIVPHICHVLWRELRPGTELLDQPWPQADDQALIQDEVEIVVQINGKLRGQIRIAREADRAAVERTALQDEHIQKSIAYRPVKRVIVVPGKLINIVV</sequence>
<keyword id="KW-0030">Aminoacyl-tRNA synthetase</keyword>
<keyword id="KW-0067">ATP-binding</keyword>
<keyword id="KW-0963">Cytoplasm</keyword>
<keyword id="KW-0436">Ligase</keyword>
<keyword id="KW-0547">Nucleotide-binding</keyword>
<keyword id="KW-0648">Protein biosynthesis</keyword>
<keyword id="KW-1185">Reference proteome</keyword>
<dbReference type="EC" id="6.1.1.4" evidence="1"/>
<dbReference type="EMBL" id="AL954747">
    <property type="protein sequence ID" value="CAD85050.1"/>
    <property type="molecule type" value="Genomic_DNA"/>
</dbReference>
<dbReference type="RefSeq" id="WP_011111730.1">
    <property type="nucleotide sequence ID" value="NC_004757.1"/>
</dbReference>
<dbReference type="SMR" id="Q820M7"/>
<dbReference type="STRING" id="228410.NE1139"/>
<dbReference type="GeneID" id="87104316"/>
<dbReference type="KEGG" id="neu:NE1139"/>
<dbReference type="eggNOG" id="COG0495">
    <property type="taxonomic scope" value="Bacteria"/>
</dbReference>
<dbReference type="HOGENOM" id="CLU_004427_0_0_4"/>
<dbReference type="OrthoDB" id="9810365at2"/>
<dbReference type="PhylomeDB" id="Q820M7"/>
<dbReference type="Proteomes" id="UP000001416">
    <property type="component" value="Chromosome"/>
</dbReference>
<dbReference type="GO" id="GO:0005829">
    <property type="term" value="C:cytosol"/>
    <property type="evidence" value="ECO:0007669"/>
    <property type="project" value="TreeGrafter"/>
</dbReference>
<dbReference type="GO" id="GO:0002161">
    <property type="term" value="F:aminoacyl-tRNA deacylase activity"/>
    <property type="evidence" value="ECO:0007669"/>
    <property type="project" value="InterPro"/>
</dbReference>
<dbReference type="GO" id="GO:0005524">
    <property type="term" value="F:ATP binding"/>
    <property type="evidence" value="ECO:0007669"/>
    <property type="project" value="UniProtKB-UniRule"/>
</dbReference>
<dbReference type="GO" id="GO:0004823">
    <property type="term" value="F:leucine-tRNA ligase activity"/>
    <property type="evidence" value="ECO:0007669"/>
    <property type="project" value="UniProtKB-UniRule"/>
</dbReference>
<dbReference type="GO" id="GO:0006429">
    <property type="term" value="P:leucyl-tRNA aminoacylation"/>
    <property type="evidence" value="ECO:0007669"/>
    <property type="project" value="UniProtKB-UniRule"/>
</dbReference>
<dbReference type="CDD" id="cd07958">
    <property type="entry name" value="Anticodon_Ia_Leu_BEm"/>
    <property type="match status" value="1"/>
</dbReference>
<dbReference type="CDD" id="cd00812">
    <property type="entry name" value="LeuRS_core"/>
    <property type="match status" value="1"/>
</dbReference>
<dbReference type="FunFam" id="3.40.50.620:FF:000003">
    <property type="entry name" value="Leucine--tRNA ligase"/>
    <property type="match status" value="1"/>
</dbReference>
<dbReference type="FunFam" id="3.40.50.620:FF:000124">
    <property type="entry name" value="Leucine--tRNA ligase"/>
    <property type="match status" value="1"/>
</dbReference>
<dbReference type="FunFam" id="3.90.740.10:FF:000012">
    <property type="entry name" value="Leucine--tRNA ligase"/>
    <property type="match status" value="1"/>
</dbReference>
<dbReference type="FunFam" id="1.10.730.10:FF:000011">
    <property type="entry name" value="Leucine--tRNA ligase chloroplastic/mitochondrial"/>
    <property type="match status" value="1"/>
</dbReference>
<dbReference type="Gene3D" id="2.20.28.290">
    <property type="match status" value="1"/>
</dbReference>
<dbReference type="Gene3D" id="3.10.20.590">
    <property type="match status" value="1"/>
</dbReference>
<dbReference type="Gene3D" id="3.40.50.620">
    <property type="entry name" value="HUPs"/>
    <property type="match status" value="2"/>
</dbReference>
<dbReference type="Gene3D" id="1.10.730.10">
    <property type="entry name" value="Isoleucyl-tRNA Synthetase, Domain 1"/>
    <property type="match status" value="1"/>
</dbReference>
<dbReference type="Gene3D" id="3.90.740.10">
    <property type="entry name" value="Valyl/Leucyl/Isoleucyl-tRNA synthetase, editing domain"/>
    <property type="match status" value="1"/>
</dbReference>
<dbReference type="HAMAP" id="MF_00049_B">
    <property type="entry name" value="Leu_tRNA_synth_B"/>
    <property type="match status" value="1"/>
</dbReference>
<dbReference type="InterPro" id="IPR001412">
    <property type="entry name" value="aa-tRNA-synth_I_CS"/>
</dbReference>
<dbReference type="InterPro" id="IPR002300">
    <property type="entry name" value="aa-tRNA-synth_Ia"/>
</dbReference>
<dbReference type="InterPro" id="IPR002302">
    <property type="entry name" value="Leu-tRNA-ligase"/>
</dbReference>
<dbReference type="InterPro" id="IPR025709">
    <property type="entry name" value="Leu_tRNA-synth_edit"/>
</dbReference>
<dbReference type="InterPro" id="IPR013155">
    <property type="entry name" value="M/V/L/I-tRNA-synth_anticd-bd"/>
</dbReference>
<dbReference type="InterPro" id="IPR015413">
    <property type="entry name" value="Methionyl/Leucyl_tRNA_Synth"/>
</dbReference>
<dbReference type="InterPro" id="IPR014729">
    <property type="entry name" value="Rossmann-like_a/b/a_fold"/>
</dbReference>
<dbReference type="InterPro" id="IPR009080">
    <property type="entry name" value="tRNAsynth_Ia_anticodon-bd"/>
</dbReference>
<dbReference type="InterPro" id="IPR009008">
    <property type="entry name" value="Val/Leu/Ile-tRNA-synth_edit"/>
</dbReference>
<dbReference type="NCBIfam" id="TIGR00396">
    <property type="entry name" value="leuS_bact"/>
    <property type="match status" value="1"/>
</dbReference>
<dbReference type="PANTHER" id="PTHR43740:SF2">
    <property type="entry name" value="LEUCINE--TRNA LIGASE, MITOCHONDRIAL"/>
    <property type="match status" value="1"/>
</dbReference>
<dbReference type="PANTHER" id="PTHR43740">
    <property type="entry name" value="LEUCYL-TRNA SYNTHETASE"/>
    <property type="match status" value="1"/>
</dbReference>
<dbReference type="Pfam" id="PF08264">
    <property type="entry name" value="Anticodon_1"/>
    <property type="match status" value="1"/>
</dbReference>
<dbReference type="Pfam" id="PF00133">
    <property type="entry name" value="tRNA-synt_1"/>
    <property type="match status" value="2"/>
</dbReference>
<dbReference type="Pfam" id="PF13603">
    <property type="entry name" value="tRNA-synt_1_2"/>
    <property type="match status" value="1"/>
</dbReference>
<dbReference type="Pfam" id="PF09334">
    <property type="entry name" value="tRNA-synt_1g"/>
    <property type="match status" value="1"/>
</dbReference>
<dbReference type="PRINTS" id="PR00985">
    <property type="entry name" value="TRNASYNTHLEU"/>
</dbReference>
<dbReference type="SUPFAM" id="SSF47323">
    <property type="entry name" value="Anticodon-binding domain of a subclass of class I aminoacyl-tRNA synthetases"/>
    <property type="match status" value="1"/>
</dbReference>
<dbReference type="SUPFAM" id="SSF52374">
    <property type="entry name" value="Nucleotidylyl transferase"/>
    <property type="match status" value="1"/>
</dbReference>
<dbReference type="SUPFAM" id="SSF50677">
    <property type="entry name" value="ValRS/IleRS/LeuRS editing domain"/>
    <property type="match status" value="1"/>
</dbReference>
<dbReference type="PROSITE" id="PS00178">
    <property type="entry name" value="AA_TRNA_LIGASE_I"/>
    <property type="match status" value="1"/>
</dbReference>
<reference key="1">
    <citation type="journal article" date="2003" name="J. Bacteriol.">
        <title>Complete genome sequence of the ammonia-oxidizing bacterium and obligate chemolithoautotroph Nitrosomonas europaea.</title>
        <authorList>
            <person name="Chain P."/>
            <person name="Lamerdin J.E."/>
            <person name="Larimer F.W."/>
            <person name="Regala W."/>
            <person name="Lao V."/>
            <person name="Land M.L."/>
            <person name="Hauser L."/>
            <person name="Hooper A.B."/>
            <person name="Klotz M.G."/>
            <person name="Norton J."/>
            <person name="Sayavedra-Soto L.A."/>
            <person name="Arciero D.M."/>
            <person name="Hommes N.G."/>
            <person name="Whittaker M.M."/>
            <person name="Arp D.J."/>
        </authorList>
    </citation>
    <scope>NUCLEOTIDE SEQUENCE [LARGE SCALE GENOMIC DNA]</scope>
    <source>
        <strain>ATCC 19718 / CIP 103999 / KCTC 2705 / NBRC 14298</strain>
    </source>
</reference>
<comment type="catalytic activity">
    <reaction evidence="1">
        <text>tRNA(Leu) + L-leucine + ATP = L-leucyl-tRNA(Leu) + AMP + diphosphate</text>
        <dbReference type="Rhea" id="RHEA:11688"/>
        <dbReference type="Rhea" id="RHEA-COMP:9613"/>
        <dbReference type="Rhea" id="RHEA-COMP:9622"/>
        <dbReference type="ChEBI" id="CHEBI:30616"/>
        <dbReference type="ChEBI" id="CHEBI:33019"/>
        <dbReference type="ChEBI" id="CHEBI:57427"/>
        <dbReference type="ChEBI" id="CHEBI:78442"/>
        <dbReference type="ChEBI" id="CHEBI:78494"/>
        <dbReference type="ChEBI" id="CHEBI:456215"/>
        <dbReference type="EC" id="6.1.1.4"/>
    </reaction>
</comment>
<comment type="subcellular location">
    <subcellularLocation>
        <location evidence="1">Cytoplasm</location>
    </subcellularLocation>
</comment>
<comment type="similarity">
    <text evidence="1">Belongs to the class-I aminoacyl-tRNA synthetase family.</text>
</comment>
<accession>Q820M7</accession>
<feature type="chain" id="PRO_0000152055" description="Leucine--tRNA ligase">
    <location>
        <begin position="1"/>
        <end position="869"/>
    </location>
</feature>
<feature type="short sequence motif" description="'HIGH' region">
    <location>
        <begin position="42"/>
        <end position="52"/>
    </location>
</feature>
<feature type="short sequence motif" description="'KMSKS' region">
    <location>
        <begin position="624"/>
        <end position="628"/>
    </location>
</feature>
<feature type="binding site" evidence="1">
    <location>
        <position position="627"/>
    </location>
    <ligand>
        <name>ATP</name>
        <dbReference type="ChEBI" id="CHEBI:30616"/>
    </ligand>
</feature>
<proteinExistence type="inferred from homology"/>
<protein>
    <recommendedName>
        <fullName evidence="1">Leucine--tRNA ligase</fullName>
        <ecNumber evidence="1">6.1.1.4</ecNumber>
    </recommendedName>
    <alternativeName>
        <fullName evidence="1">Leucyl-tRNA synthetase</fullName>
        <shortName evidence="1">LeuRS</shortName>
    </alternativeName>
</protein>
<organism>
    <name type="scientific">Nitrosomonas europaea (strain ATCC 19718 / CIP 103999 / KCTC 2705 / NBRC 14298)</name>
    <dbReference type="NCBI Taxonomy" id="228410"/>
    <lineage>
        <taxon>Bacteria</taxon>
        <taxon>Pseudomonadati</taxon>
        <taxon>Pseudomonadota</taxon>
        <taxon>Betaproteobacteria</taxon>
        <taxon>Nitrosomonadales</taxon>
        <taxon>Nitrosomonadaceae</taxon>
        <taxon>Nitrosomonas</taxon>
    </lineage>
</organism>
<evidence type="ECO:0000255" key="1">
    <source>
        <dbReference type="HAMAP-Rule" id="MF_00049"/>
    </source>
</evidence>
<name>SYL_NITEU</name>